<protein>
    <recommendedName>
        <fullName evidence="1">Leucine--tRNA ligase</fullName>
        <ecNumber evidence="1">6.1.1.4</ecNumber>
    </recommendedName>
    <alternativeName>
        <fullName evidence="1">Leucyl-tRNA synthetase</fullName>
        <shortName evidence="1">LeuRS</shortName>
    </alternativeName>
</protein>
<reference key="1">
    <citation type="journal article" date="2013" name="Proc. Natl. Acad. Sci. U.S.A.">
        <title>Polynucleobacter necessarius, a model for genome reduction in both free-living and symbiotic bacteria.</title>
        <authorList>
            <person name="Boscaro V."/>
            <person name="Felletti M."/>
            <person name="Vannini C."/>
            <person name="Ackerman M.S."/>
            <person name="Chain P.S."/>
            <person name="Malfatti S."/>
            <person name="Vergez L.M."/>
            <person name="Shin M."/>
            <person name="Doak T.G."/>
            <person name="Lynch M."/>
            <person name="Petroni G."/>
        </authorList>
    </citation>
    <scope>NUCLEOTIDE SEQUENCE [LARGE SCALE GENOMIC DNA]</scope>
    <source>
        <strain>STIR1</strain>
    </source>
</reference>
<evidence type="ECO:0000255" key="1">
    <source>
        <dbReference type="HAMAP-Rule" id="MF_00049"/>
    </source>
</evidence>
<gene>
    <name evidence="1" type="primary">leuS</name>
    <name type="ordered locus">Pnec_0254</name>
</gene>
<organism>
    <name type="scientific">Polynucleobacter necessarius subsp. necessarius (strain STIR1)</name>
    <dbReference type="NCBI Taxonomy" id="452638"/>
    <lineage>
        <taxon>Bacteria</taxon>
        <taxon>Pseudomonadati</taxon>
        <taxon>Pseudomonadota</taxon>
        <taxon>Betaproteobacteria</taxon>
        <taxon>Burkholderiales</taxon>
        <taxon>Burkholderiaceae</taxon>
        <taxon>Polynucleobacter</taxon>
    </lineage>
</organism>
<accession>B1XT72</accession>
<keyword id="KW-0030">Aminoacyl-tRNA synthetase</keyword>
<keyword id="KW-0067">ATP-binding</keyword>
<keyword id="KW-0963">Cytoplasm</keyword>
<keyword id="KW-0436">Ligase</keyword>
<keyword id="KW-0547">Nucleotide-binding</keyword>
<keyword id="KW-0648">Protein biosynthesis</keyword>
<name>SYL_POLNS</name>
<dbReference type="EC" id="6.1.1.4" evidence="1"/>
<dbReference type="EMBL" id="CP001010">
    <property type="protein sequence ID" value="ACB43549.1"/>
    <property type="molecule type" value="Genomic_DNA"/>
</dbReference>
<dbReference type="SMR" id="B1XT72"/>
<dbReference type="STRING" id="452638.Pnec_0254"/>
<dbReference type="KEGG" id="pne:Pnec_0254"/>
<dbReference type="eggNOG" id="COG0495">
    <property type="taxonomic scope" value="Bacteria"/>
</dbReference>
<dbReference type="HOGENOM" id="CLU_004427_0_0_4"/>
<dbReference type="OrthoDB" id="9810365at2"/>
<dbReference type="GO" id="GO:0005829">
    <property type="term" value="C:cytosol"/>
    <property type="evidence" value="ECO:0007669"/>
    <property type="project" value="TreeGrafter"/>
</dbReference>
<dbReference type="GO" id="GO:0002161">
    <property type="term" value="F:aminoacyl-tRNA deacylase activity"/>
    <property type="evidence" value="ECO:0007669"/>
    <property type="project" value="InterPro"/>
</dbReference>
<dbReference type="GO" id="GO:0005524">
    <property type="term" value="F:ATP binding"/>
    <property type="evidence" value="ECO:0007669"/>
    <property type="project" value="UniProtKB-UniRule"/>
</dbReference>
<dbReference type="GO" id="GO:0004823">
    <property type="term" value="F:leucine-tRNA ligase activity"/>
    <property type="evidence" value="ECO:0007669"/>
    <property type="project" value="UniProtKB-UniRule"/>
</dbReference>
<dbReference type="GO" id="GO:0006429">
    <property type="term" value="P:leucyl-tRNA aminoacylation"/>
    <property type="evidence" value="ECO:0007669"/>
    <property type="project" value="UniProtKB-UniRule"/>
</dbReference>
<dbReference type="CDD" id="cd07958">
    <property type="entry name" value="Anticodon_Ia_Leu_BEm"/>
    <property type="match status" value="1"/>
</dbReference>
<dbReference type="CDD" id="cd00812">
    <property type="entry name" value="LeuRS_core"/>
    <property type="match status" value="1"/>
</dbReference>
<dbReference type="FunFam" id="1.10.730.10:FF:000002">
    <property type="entry name" value="Leucine--tRNA ligase"/>
    <property type="match status" value="1"/>
</dbReference>
<dbReference type="FunFam" id="2.20.28.290:FF:000001">
    <property type="entry name" value="Leucine--tRNA ligase"/>
    <property type="match status" value="1"/>
</dbReference>
<dbReference type="FunFam" id="3.10.20.590:FF:000001">
    <property type="entry name" value="Leucine--tRNA ligase"/>
    <property type="match status" value="1"/>
</dbReference>
<dbReference type="FunFam" id="3.40.50.620:FF:000003">
    <property type="entry name" value="Leucine--tRNA ligase"/>
    <property type="match status" value="1"/>
</dbReference>
<dbReference type="FunFam" id="3.40.50.620:FF:000056">
    <property type="entry name" value="Leucine--tRNA ligase"/>
    <property type="match status" value="1"/>
</dbReference>
<dbReference type="FunFam" id="3.90.740.10:FF:000012">
    <property type="entry name" value="Leucine--tRNA ligase"/>
    <property type="match status" value="1"/>
</dbReference>
<dbReference type="Gene3D" id="2.20.28.290">
    <property type="match status" value="1"/>
</dbReference>
<dbReference type="Gene3D" id="3.10.20.590">
    <property type="match status" value="1"/>
</dbReference>
<dbReference type="Gene3D" id="3.40.50.620">
    <property type="entry name" value="HUPs"/>
    <property type="match status" value="2"/>
</dbReference>
<dbReference type="Gene3D" id="1.10.730.10">
    <property type="entry name" value="Isoleucyl-tRNA Synthetase, Domain 1"/>
    <property type="match status" value="1"/>
</dbReference>
<dbReference type="Gene3D" id="3.90.740.10">
    <property type="entry name" value="Valyl/Leucyl/Isoleucyl-tRNA synthetase, editing domain"/>
    <property type="match status" value="1"/>
</dbReference>
<dbReference type="HAMAP" id="MF_00049_B">
    <property type="entry name" value="Leu_tRNA_synth_B"/>
    <property type="match status" value="1"/>
</dbReference>
<dbReference type="InterPro" id="IPR001412">
    <property type="entry name" value="aa-tRNA-synth_I_CS"/>
</dbReference>
<dbReference type="InterPro" id="IPR002300">
    <property type="entry name" value="aa-tRNA-synth_Ia"/>
</dbReference>
<dbReference type="InterPro" id="IPR002302">
    <property type="entry name" value="Leu-tRNA-ligase"/>
</dbReference>
<dbReference type="InterPro" id="IPR025709">
    <property type="entry name" value="Leu_tRNA-synth_edit"/>
</dbReference>
<dbReference type="InterPro" id="IPR013155">
    <property type="entry name" value="M/V/L/I-tRNA-synth_anticd-bd"/>
</dbReference>
<dbReference type="InterPro" id="IPR015413">
    <property type="entry name" value="Methionyl/Leucyl_tRNA_Synth"/>
</dbReference>
<dbReference type="InterPro" id="IPR014729">
    <property type="entry name" value="Rossmann-like_a/b/a_fold"/>
</dbReference>
<dbReference type="InterPro" id="IPR009080">
    <property type="entry name" value="tRNAsynth_Ia_anticodon-bd"/>
</dbReference>
<dbReference type="InterPro" id="IPR009008">
    <property type="entry name" value="Val/Leu/Ile-tRNA-synth_edit"/>
</dbReference>
<dbReference type="NCBIfam" id="TIGR00396">
    <property type="entry name" value="leuS_bact"/>
    <property type="match status" value="1"/>
</dbReference>
<dbReference type="PANTHER" id="PTHR43740:SF2">
    <property type="entry name" value="LEUCINE--TRNA LIGASE, MITOCHONDRIAL"/>
    <property type="match status" value="1"/>
</dbReference>
<dbReference type="PANTHER" id="PTHR43740">
    <property type="entry name" value="LEUCYL-TRNA SYNTHETASE"/>
    <property type="match status" value="1"/>
</dbReference>
<dbReference type="Pfam" id="PF08264">
    <property type="entry name" value="Anticodon_1"/>
    <property type="match status" value="1"/>
</dbReference>
<dbReference type="Pfam" id="PF00133">
    <property type="entry name" value="tRNA-synt_1"/>
    <property type="match status" value="1"/>
</dbReference>
<dbReference type="Pfam" id="PF13603">
    <property type="entry name" value="tRNA-synt_1_2"/>
    <property type="match status" value="1"/>
</dbReference>
<dbReference type="Pfam" id="PF09334">
    <property type="entry name" value="tRNA-synt_1g"/>
    <property type="match status" value="1"/>
</dbReference>
<dbReference type="PRINTS" id="PR00985">
    <property type="entry name" value="TRNASYNTHLEU"/>
</dbReference>
<dbReference type="SUPFAM" id="SSF47323">
    <property type="entry name" value="Anticodon-binding domain of a subclass of class I aminoacyl-tRNA synthetases"/>
    <property type="match status" value="1"/>
</dbReference>
<dbReference type="SUPFAM" id="SSF52374">
    <property type="entry name" value="Nucleotidylyl transferase"/>
    <property type="match status" value="1"/>
</dbReference>
<dbReference type="SUPFAM" id="SSF50677">
    <property type="entry name" value="ValRS/IleRS/LeuRS editing domain"/>
    <property type="match status" value="1"/>
</dbReference>
<dbReference type="PROSITE" id="PS00178">
    <property type="entry name" value="AA_TRNA_LIGASE_I"/>
    <property type="match status" value="1"/>
</dbReference>
<feature type="chain" id="PRO_1000091342" description="Leucine--tRNA ligase">
    <location>
        <begin position="1"/>
        <end position="890"/>
    </location>
</feature>
<feature type="short sequence motif" description="'HIGH' region">
    <location>
        <begin position="48"/>
        <end position="58"/>
    </location>
</feature>
<feature type="short sequence motif" description="'KMSKS' region">
    <location>
        <begin position="645"/>
        <end position="649"/>
    </location>
</feature>
<feature type="binding site" evidence="1">
    <location>
        <position position="648"/>
    </location>
    <ligand>
        <name>ATP</name>
        <dbReference type="ChEBI" id="CHEBI:30616"/>
    </ligand>
</feature>
<proteinExistence type="inferred from homology"/>
<sequence>MSKDYDYRSIEAAAQADWEGAQVYQVAENAVDAQGKKKSKYYACSMLPYPSGKLHMGHVRNYTINDVMARQLRMQGYNVLMPMGWDAFGMPAENAAIQNKVPPAKWTYDNIAYMKKQMAAMGLAIDWSREVATCNPDYYRWNQWLFLKMLEKGIAYRKTQVVNWDPIDQTVLANEQVIDGRGWRSGALVEKREIPGYYFNITAYAEPLLSGLDGLGWPERVKTMQQNWIGKSRGVRFAFKHEIADDYGNFIQDGLLYVFTTRADTIMGVTFCAVAAEHPLATKAAANNSALAAFIEKCKTGSVIEADLATQEKEGMFTGLYVTHPLTYEPVPVWVGNYVLMSYGDGAVMGVPAHDERDFAFALKYELPIKQVIALKDESPMFNATCWEDWYAQKDGVVCFNSAQFDGLSHEEAVSAVAKALEKLGIGDIKTSFRLRDWGISRQRYWGTPIPIIHCGDESNPGCGAVPVPEADLPVVLPEDCVPDGSGNPLNKRADFLSVKCPKCGKPARRETDTMDTFVDSSWYFMRYTGPNAKTMVDERNEYWMPMDQYIGGIEHAILHLLYARFWTKIMRDLNLITFDEPFQNLLTQGMVLNETYYSEDASGKKTWLNPLDVELDLDEKGRPKGAKLIGDTLNTPVVVGGVEKMSKSKNNGVDPQALIDEYGADTARLFVMFAAPPEQQLEWSGAGVDGASRFLRRVWMYFSGQASALRDASDSLPSNLNDAEKELRREVHTILKQANFDYQRRQYNTVVSAAMKMLNILEPIKLDQNAAISAPVLRECLSILLRVLYPVVPHLTHVLWKEVGYAKTMGPLLDAPWPTVDEATLVQTEITLMLQINGKLRGDIKVPADANKEQVEALALQSEPAQKALNGGAPKKVIVVPGRLVNIVA</sequence>
<comment type="catalytic activity">
    <reaction evidence="1">
        <text>tRNA(Leu) + L-leucine + ATP = L-leucyl-tRNA(Leu) + AMP + diphosphate</text>
        <dbReference type="Rhea" id="RHEA:11688"/>
        <dbReference type="Rhea" id="RHEA-COMP:9613"/>
        <dbReference type="Rhea" id="RHEA-COMP:9622"/>
        <dbReference type="ChEBI" id="CHEBI:30616"/>
        <dbReference type="ChEBI" id="CHEBI:33019"/>
        <dbReference type="ChEBI" id="CHEBI:57427"/>
        <dbReference type="ChEBI" id="CHEBI:78442"/>
        <dbReference type="ChEBI" id="CHEBI:78494"/>
        <dbReference type="ChEBI" id="CHEBI:456215"/>
        <dbReference type="EC" id="6.1.1.4"/>
    </reaction>
</comment>
<comment type="subcellular location">
    <subcellularLocation>
        <location evidence="1">Cytoplasm</location>
    </subcellularLocation>
</comment>
<comment type="similarity">
    <text evidence="1">Belongs to the class-I aminoacyl-tRNA synthetase family.</text>
</comment>